<evidence type="ECO:0000250" key="1">
    <source>
        <dbReference type="UniProtKB" id="Q0P678"/>
    </source>
</evidence>
<evidence type="ECO:0000250" key="2">
    <source>
        <dbReference type="UniProtKB" id="Q86VM9"/>
    </source>
</evidence>
<evidence type="ECO:0000255" key="3"/>
<evidence type="ECO:0000255" key="4">
    <source>
        <dbReference type="PROSITE-ProRule" id="PRU00723"/>
    </source>
</evidence>
<evidence type="ECO:0000256" key="5">
    <source>
        <dbReference type="SAM" id="MobiDB-lite"/>
    </source>
</evidence>
<evidence type="ECO:0000303" key="6">
    <source ref="1"/>
</evidence>
<evidence type="ECO:0000305" key="7"/>
<evidence type="ECO:0007744" key="8">
    <source>
    </source>
</evidence>
<reference key="1">
    <citation type="submission" date="2003-09" db="EMBL/GenBank/DDBJ databases">
        <title>Nhn1, a novel highly conserved nuclear protein.</title>
        <authorList>
            <person name="Hidalgo de Quintana J."/>
            <person name="Ponnambalam S."/>
            <person name="Walker J.H."/>
        </authorList>
    </citation>
    <scope>NUCLEOTIDE SEQUENCE [MRNA] (ISOFORMS A AND B)</scope>
    <source>
        <strain>Wistar</strain>
    </source>
</reference>
<reference key="2">
    <citation type="journal article" date="2012" name="Nat. Commun.">
        <title>Quantitative maps of protein phosphorylation sites across 14 different rat organs and tissues.</title>
        <authorList>
            <person name="Lundby A."/>
            <person name="Secher A."/>
            <person name="Lage K."/>
            <person name="Nordsborg N.B."/>
            <person name="Dmytriyev A."/>
            <person name="Lundby C."/>
            <person name="Olsen J.V."/>
        </authorList>
    </citation>
    <scope>PHOSPHORYLATION [LARGE SCALE ANALYSIS] AT SER-44; SER-57; SER-63; SER-70; SER-74; SER-79; SER-91; SER-529; SER-846 AND SER-887</scope>
    <scope>IDENTIFICATION BY MASS SPECTROMETRY [LARGE SCALE ANALYSIS]</scope>
</reference>
<name>ZCH18_RAT</name>
<sequence length="947" mass="105537">MDVAESPELEPHSPDEEQPALSDDDILRESGSEQDLDGAGERASDLEEEENATRVQSQEEIHSDEEDQASEPKSQDQDSEAHELSRGPAGSPCEEGDDAEEDGTSDLRDEASSVTRELDEHELDYDEEVPEEPAPAAQEEEAEKAGAEEEEEKGEGAPGEEGKPDVQSVGEKEPTEAAKEKKKEDDDGEIDDGEIDDDDLEEGEVKDPSDRKVRPRPTCRFFMKGNCTWGMNCRFIHPGVNDKGNYSLITKAEPFPPNGAPPLGPHPLMPANPWGGPVVDEILPPPPPEPPTESAWERGLRHAKEVLKKATIRKEQEPDFEEKRFTVTIGEDDREFDKENEVFRDWNSRVPRDVRDTTLEPYADPYYDYEIERFWRGGQYENFRVQYTEAEPYHNYRDRERERERENRQRERERDRERDRERERRQRERERERERERDKERQRRKEEWERERAKRDEKDRQHRDRDRDKDRDKDKEKPKPRSPQPPSRQAEPPKKETASVGPQVKRADEWKDPWRRSKSPKKKLGVSVSPSRARRRRKTSASSASASNSSRSSSRSSSYSGSGSSRSRSRSSSYSSYSSRSSRRSSFSGSRSRSRSFSSSPSPSPTPSPHRPPVRTKGEPAPPPGKAGEKSIKKPAPPPAPPQATKTTAPAPEPAKPGDLREARRKERQTRTPPRRRTLSGSGSGSGSSYSGSSSRSRSLSVSSVSSVSSATSSSSSVHSVDSDDMYADLASPVSSASSRSPTPAQTKKERGKSKKEDGVREEKRKRDPSAQPPKSSKAPAGGKASQQAAAPQQAAPGQPQQGSFVAHKEIKLTLLNKAAEKGSRKRYEPSDKDRQSPPAKKANLSPDRGSRDRKSGGRMGSPKPERQRGQNAKAPAAPADRKRPLSPQSKSSSKVTSVPGKATDTATAGTKSGKASTLSRREELLKQLKAVEDAIARKRAKIPGKV</sequence>
<proteinExistence type="evidence at protein level"/>
<gene>
    <name type="primary">Zc3h18</name>
    <name type="synonym">Nhn1</name>
</gene>
<feature type="chain" id="PRO_0000311244" description="Zinc finger CCCH domain-containing protein 18">
    <location>
        <begin position="1"/>
        <end position="947"/>
    </location>
</feature>
<feature type="zinc finger region" description="C3H1-type" evidence="4">
    <location>
        <begin position="214"/>
        <end position="240"/>
    </location>
</feature>
<feature type="region of interest" description="Disordered" evidence="5">
    <location>
        <begin position="1"/>
        <end position="218"/>
    </location>
</feature>
<feature type="region of interest" description="Disordered" evidence="5">
    <location>
        <begin position="275"/>
        <end position="295"/>
    </location>
</feature>
<feature type="region of interest" description="Disordered" evidence="5">
    <location>
        <begin position="387"/>
        <end position="921"/>
    </location>
</feature>
<feature type="coiled-coil region" evidence="3">
    <location>
        <begin position="915"/>
        <end position="944"/>
    </location>
</feature>
<feature type="compositionally biased region" description="Basic and acidic residues" evidence="5">
    <location>
        <begin position="73"/>
        <end position="85"/>
    </location>
</feature>
<feature type="compositionally biased region" description="Acidic residues" evidence="5">
    <location>
        <begin position="94"/>
        <end position="104"/>
    </location>
</feature>
<feature type="compositionally biased region" description="Basic and acidic residues" evidence="5">
    <location>
        <begin position="105"/>
        <end position="119"/>
    </location>
</feature>
<feature type="compositionally biased region" description="Acidic residues" evidence="5">
    <location>
        <begin position="120"/>
        <end position="131"/>
    </location>
</feature>
<feature type="compositionally biased region" description="Acidic residues" evidence="5">
    <location>
        <begin position="138"/>
        <end position="153"/>
    </location>
</feature>
<feature type="compositionally biased region" description="Basic and acidic residues" evidence="5">
    <location>
        <begin position="160"/>
        <end position="185"/>
    </location>
</feature>
<feature type="compositionally biased region" description="Acidic residues" evidence="5">
    <location>
        <begin position="186"/>
        <end position="202"/>
    </location>
</feature>
<feature type="compositionally biased region" description="Basic and acidic residues" evidence="5">
    <location>
        <begin position="203"/>
        <end position="212"/>
    </location>
</feature>
<feature type="compositionally biased region" description="Basic and acidic residues" evidence="5">
    <location>
        <begin position="391"/>
        <end position="479"/>
    </location>
</feature>
<feature type="compositionally biased region" description="Basic and acidic residues" evidence="5">
    <location>
        <begin position="505"/>
        <end position="515"/>
    </location>
</feature>
<feature type="compositionally biased region" description="Low complexity" evidence="5">
    <location>
        <begin position="540"/>
        <end position="601"/>
    </location>
</feature>
<feature type="compositionally biased region" description="Pro residues" evidence="5">
    <location>
        <begin position="602"/>
        <end position="611"/>
    </location>
</feature>
<feature type="compositionally biased region" description="Basic and acidic residues" evidence="5">
    <location>
        <begin position="656"/>
        <end position="665"/>
    </location>
</feature>
<feature type="compositionally biased region" description="Low complexity" evidence="5">
    <location>
        <begin position="687"/>
        <end position="720"/>
    </location>
</feature>
<feature type="compositionally biased region" description="Low complexity" evidence="5">
    <location>
        <begin position="731"/>
        <end position="745"/>
    </location>
</feature>
<feature type="compositionally biased region" description="Basic and acidic residues" evidence="5">
    <location>
        <begin position="755"/>
        <end position="769"/>
    </location>
</feature>
<feature type="compositionally biased region" description="Low complexity" evidence="5">
    <location>
        <begin position="773"/>
        <end position="804"/>
    </location>
</feature>
<feature type="compositionally biased region" description="Basic and acidic residues" evidence="5">
    <location>
        <begin position="819"/>
        <end position="836"/>
    </location>
</feature>
<feature type="compositionally biased region" description="Low complexity" evidence="5">
    <location>
        <begin position="887"/>
        <end position="918"/>
    </location>
</feature>
<feature type="modified residue" description="N-acetylmethionine" evidence="2">
    <location>
        <position position="1"/>
    </location>
</feature>
<feature type="modified residue" description="Phosphoserine" evidence="2">
    <location>
        <position position="6"/>
    </location>
</feature>
<feature type="modified residue" description="Phosphoserine" evidence="2">
    <location>
        <position position="32"/>
    </location>
</feature>
<feature type="modified residue" description="Phosphoserine" evidence="8">
    <location>
        <position position="44"/>
    </location>
</feature>
<feature type="modified residue" description="Phosphoserine" evidence="8">
    <location>
        <position position="57"/>
    </location>
</feature>
<feature type="modified residue" description="Phosphoserine" evidence="8">
    <location>
        <position position="63"/>
    </location>
</feature>
<feature type="modified residue" description="Phosphoserine" evidence="8">
    <location>
        <position position="70"/>
    </location>
</feature>
<feature type="modified residue" description="Phosphoserine" evidence="8">
    <location>
        <position position="74"/>
    </location>
</feature>
<feature type="modified residue" description="Phosphoserine" evidence="8">
    <location>
        <position position="79"/>
    </location>
</feature>
<feature type="modified residue" description="Phosphoserine" evidence="8">
    <location>
        <position position="91"/>
    </location>
</feature>
<feature type="modified residue" description="Phosphothreonine" evidence="2">
    <location>
        <position position="104"/>
    </location>
</feature>
<feature type="modified residue" description="Phosphoserine" evidence="2">
    <location>
        <position position="105"/>
    </location>
</feature>
<feature type="modified residue" description="Phosphoserine" evidence="2">
    <location>
        <position position="113"/>
    </location>
</feature>
<feature type="modified residue" description="Phosphoserine" evidence="2">
    <location>
        <position position="168"/>
    </location>
</feature>
<feature type="modified residue" description="Phosphoserine" evidence="2">
    <location>
        <position position="482"/>
    </location>
</feature>
<feature type="modified residue" description="Phosphoserine" evidence="2">
    <location>
        <position position="527"/>
    </location>
</feature>
<feature type="modified residue" description="Phosphoserine" evidence="8">
    <location>
        <position position="529"/>
    </location>
</feature>
<feature type="modified residue" description="Phosphoserine" evidence="2">
    <location>
        <position position="531"/>
    </location>
</feature>
<feature type="modified residue" description="N6-acetyllysine" evidence="1">
    <location>
        <position position="809"/>
    </location>
</feature>
<feature type="modified residue" description="Phosphoserine" evidence="2">
    <location>
        <position position="837"/>
    </location>
</feature>
<feature type="modified residue" description="Phosphoserine" evidence="8">
    <location>
        <position position="846"/>
    </location>
</feature>
<feature type="modified residue" description="Phosphoserine" evidence="2">
    <location>
        <position position="862"/>
    </location>
</feature>
<feature type="modified residue" description="Phosphoserine" evidence="8">
    <location>
        <position position="887"/>
    </location>
</feature>
<feature type="modified residue" description="Phosphoserine" evidence="2">
    <location>
        <position position="890"/>
    </location>
</feature>
<feature type="cross-link" description="Glycyl lysine isopeptide (Lys-Gly) (interchain with G-Cter in SUMO2)" evidence="2">
    <location>
        <position position="505"/>
    </location>
</feature>
<feature type="cross-link" description="Glycyl lysine isopeptide (Lys-Gly) (interchain with G-Cter in SUMO2)" evidence="2">
    <location>
        <position position="617"/>
    </location>
</feature>
<feature type="cross-link" description="Glycyl lysine isopeptide (Lys-Gly) (interchain with G-Cter in SUMO2)" evidence="2">
    <location>
        <position position="656"/>
    </location>
</feature>
<feature type="cross-link" description="Glycyl lysine isopeptide (Lys-Gly) (interchain with G-Cter in SUMO2)" evidence="2">
    <location>
        <position position="812"/>
    </location>
</feature>
<feature type="cross-link" description="Glycyl lysine isopeptide (Lys-Gly) (interchain with G-Cter in SUMO2)" evidence="2">
    <location>
        <position position="902"/>
    </location>
</feature>
<feature type="splice variant" id="VSP_029458" description="In isoform B." evidence="6">
    <original>M</original>
    <variation>MKDVVTPLSTLLPPIPNSIPLRGQV</variation>
    <location>
        <position position="223"/>
    </location>
</feature>
<organism>
    <name type="scientific">Rattus norvegicus</name>
    <name type="common">Rat</name>
    <dbReference type="NCBI Taxonomy" id="10116"/>
    <lineage>
        <taxon>Eukaryota</taxon>
        <taxon>Metazoa</taxon>
        <taxon>Chordata</taxon>
        <taxon>Craniata</taxon>
        <taxon>Vertebrata</taxon>
        <taxon>Euteleostomi</taxon>
        <taxon>Mammalia</taxon>
        <taxon>Eutheria</taxon>
        <taxon>Euarchontoglires</taxon>
        <taxon>Glires</taxon>
        <taxon>Rodentia</taxon>
        <taxon>Myomorpha</taxon>
        <taxon>Muroidea</taxon>
        <taxon>Muridae</taxon>
        <taxon>Murinae</taxon>
        <taxon>Rattus</taxon>
    </lineage>
</organism>
<dbReference type="EMBL" id="AY389807">
    <property type="protein sequence ID" value="AAR92226.1"/>
    <property type="molecule type" value="mRNA"/>
</dbReference>
<dbReference type="EMBL" id="AY389808">
    <property type="protein sequence ID" value="AAR92227.1"/>
    <property type="molecule type" value="mRNA"/>
</dbReference>
<dbReference type="RefSeq" id="NP_001421356.1">
    <molecule id="Q6TQE1-1"/>
    <property type="nucleotide sequence ID" value="NM_001434427.1"/>
</dbReference>
<dbReference type="RefSeq" id="NP_958819.1">
    <molecule id="Q6TQE1-2"/>
    <property type="nucleotide sequence ID" value="NM_201416.2"/>
</dbReference>
<dbReference type="RefSeq" id="XP_006255823.1">
    <property type="nucleotide sequence ID" value="XM_006255761.2"/>
</dbReference>
<dbReference type="FunCoup" id="Q6TQE1">
    <property type="interactions" value="4668"/>
</dbReference>
<dbReference type="STRING" id="10116.ENSRNOP00000048376"/>
<dbReference type="GlyGen" id="Q6TQE1">
    <property type="glycosylation" value="2 sites"/>
</dbReference>
<dbReference type="iPTMnet" id="Q6TQE1"/>
<dbReference type="PhosphoSitePlus" id="Q6TQE1"/>
<dbReference type="PaxDb" id="10116-ENSRNOP00000048376"/>
<dbReference type="PeptideAtlas" id="Q6TQE1"/>
<dbReference type="GeneID" id="292067"/>
<dbReference type="KEGG" id="rno:292067"/>
<dbReference type="UCSC" id="RGD:1303257">
    <molecule id="Q6TQE1-1"/>
    <property type="organism name" value="rat"/>
</dbReference>
<dbReference type="AGR" id="RGD:1303257"/>
<dbReference type="CTD" id="124245"/>
<dbReference type="RGD" id="1303257">
    <property type="gene designation" value="Zc3h18"/>
</dbReference>
<dbReference type="VEuPathDB" id="HostDB:ENSRNOG00000028501"/>
<dbReference type="eggNOG" id="ENOG502R7WP">
    <property type="taxonomic scope" value="Eukaryota"/>
</dbReference>
<dbReference type="HOGENOM" id="CLU_012901_0_0_1"/>
<dbReference type="InParanoid" id="Q6TQE1"/>
<dbReference type="PRO" id="PR:Q6TQE1"/>
<dbReference type="Proteomes" id="UP000002494">
    <property type="component" value="Chromosome 19"/>
</dbReference>
<dbReference type="Bgee" id="ENSRNOG00000028501">
    <property type="expression patterns" value="Expressed in skeletal muscle tissue and 18 other cell types or tissues"/>
</dbReference>
<dbReference type="ExpressionAtlas" id="Q6TQE1">
    <property type="expression patterns" value="baseline and differential"/>
</dbReference>
<dbReference type="GO" id="GO:0005634">
    <property type="term" value="C:nucleus"/>
    <property type="evidence" value="ECO:0007669"/>
    <property type="project" value="UniProtKB-SubCell"/>
</dbReference>
<dbReference type="GO" id="GO:0032991">
    <property type="term" value="C:protein-containing complex"/>
    <property type="evidence" value="ECO:0000266"/>
    <property type="project" value="RGD"/>
</dbReference>
<dbReference type="GO" id="GO:1990904">
    <property type="term" value="C:ribonucleoprotein complex"/>
    <property type="evidence" value="ECO:0000266"/>
    <property type="project" value="RGD"/>
</dbReference>
<dbReference type="GO" id="GO:0140262">
    <property type="term" value="F:mRNA cap binding complex binding"/>
    <property type="evidence" value="ECO:0000266"/>
    <property type="project" value="RGD"/>
</dbReference>
<dbReference type="GO" id="GO:0030674">
    <property type="term" value="F:protein-macromolecule adaptor activity"/>
    <property type="evidence" value="ECO:0000266"/>
    <property type="project" value="RGD"/>
</dbReference>
<dbReference type="GO" id="GO:0008270">
    <property type="term" value="F:zinc ion binding"/>
    <property type="evidence" value="ECO:0007669"/>
    <property type="project" value="UniProtKB-KW"/>
</dbReference>
<dbReference type="GO" id="GO:0050779">
    <property type="term" value="P:RNA destabilization"/>
    <property type="evidence" value="ECO:0000266"/>
    <property type="project" value="RGD"/>
</dbReference>
<dbReference type="Gene3D" id="4.10.1000.10">
    <property type="entry name" value="Zinc finger, CCCH-type"/>
    <property type="match status" value="1"/>
</dbReference>
<dbReference type="InterPro" id="IPR052647">
    <property type="entry name" value="Zinc_finger_CCCH-type"/>
</dbReference>
<dbReference type="InterPro" id="IPR041367">
    <property type="entry name" value="Znf-CCCH_4"/>
</dbReference>
<dbReference type="InterPro" id="IPR000571">
    <property type="entry name" value="Znf_CCCH"/>
</dbReference>
<dbReference type="InterPro" id="IPR036855">
    <property type="entry name" value="Znf_CCCH_sf"/>
</dbReference>
<dbReference type="PANTHER" id="PTHR46582">
    <property type="entry name" value="ZINC FINGER CCCH DOMAIN-CONTAINING PROTEIN 18"/>
    <property type="match status" value="1"/>
</dbReference>
<dbReference type="PANTHER" id="PTHR46582:SF1">
    <property type="entry name" value="ZINC FINGER CCCH DOMAIN-CONTAINING PROTEIN 18"/>
    <property type="match status" value="1"/>
</dbReference>
<dbReference type="Pfam" id="PF18044">
    <property type="entry name" value="zf-CCCH_4"/>
    <property type="match status" value="1"/>
</dbReference>
<dbReference type="SMART" id="SM00356">
    <property type="entry name" value="ZnF_C3H1"/>
    <property type="match status" value="1"/>
</dbReference>
<dbReference type="SUPFAM" id="SSF90229">
    <property type="entry name" value="CCCH zinc finger"/>
    <property type="match status" value="1"/>
</dbReference>
<dbReference type="PROSITE" id="PS50103">
    <property type="entry name" value="ZF_C3H1"/>
    <property type="match status" value="1"/>
</dbReference>
<comment type="subunit">
    <text evidence="2">Interacts with ZFC3H1 in a RNase-insensitive manner.</text>
</comment>
<comment type="subcellular location">
    <subcellularLocation>
        <location evidence="7">Nucleus</location>
    </subcellularLocation>
</comment>
<comment type="alternative products">
    <event type="alternative splicing"/>
    <isoform>
        <id>Q6TQE1-1</id>
        <name>A</name>
        <sequence type="displayed"/>
    </isoform>
    <isoform>
        <id>Q6TQE1-2</id>
        <name>B</name>
        <sequence type="described" ref="VSP_029458"/>
    </isoform>
</comment>
<keyword id="KW-0007">Acetylation</keyword>
<keyword id="KW-0025">Alternative splicing</keyword>
<keyword id="KW-0175">Coiled coil</keyword>
<keyword id="KW-1017">Isopeptide bond</keyword>
<keyword id="KW-0479">Metal-binding</keyword>
<keyword id="KW-0539">Nucleus</keyword>
<keyword id="KW-0597">Phosphoprotein</keyword>
<keyword id="KW-1185">Reference proteome</keyword>
<keyword id="KW-0832">Ubl conjugation</keyword>
<keyword id="KW-0862">Zinc</keyword>
<keyword id="KW-0863">Zinc-finger</keyword>
<accession>Q6TQE1</accession>
<accession>Q6TQE2</accession>
<protein>
    <recommendedName>
        <fullName>Zinc finger CCCH domain-containing protein 18</fullName>
    </recommendedName>
    <alternativeName>
        <fullName>Nuclear protein NHN1</fullName>
    </alternativeName>
</protein>